<gene>
    <name evidence="1" type="primary">rpsD</name>
    <name type="ordered locus">cgR_0682</name>
</gene>
<evidence type="ECO:0000255" key="1">
    <source>
        <dbReference type="HAMAP-Rule" id="MF_01306"/>
    </source>
</evidence>
<evidence type="ECO:0000305" key="2"/>
<reference key="1">
    <citation type="journal article" date="2007" name="Microbiology">
        <title>Comparative analysis of the Corynebacterium glutamicum group and complete genome sequence of strain R.</title>
        <authorList>
            <person name="Yukawa H."/>
            <person name="Omumasaba C.A."/>
            <person name="Nonaka H."/>
            <person name="Kos P."/>
            <person name="Okai N."/>
            <person name="Suzuki N."/>
            <person name="Suda M."/>
            <person name="Tsuge Y."/>
            <person name="Watanabe J."/>
            <person name="Ikeda Y."/>
            <person name="Vertes A.A."/>
            <person name="Inui M."/>
        </authorList>
    </citation>
    <scope>NUCLEOTIDE SEQUENCE [LARGE SCALE GENOMIC DNA]</scope>
    <source>
        <strain>R</strain>
    </source>
</reference>
<dbReference type="EMBL" id="AP009044">
    <property type="protein sequence ID" value="BAF53653.1"/>
    <property type="molecule type" value="Genomic_DNA"/>
</dbReference>
<dbReference type="RefSeq" id="WP_003854431.1">
    <property type="nucleotide sequence ID" value="NC_009342.1"/>
</dbReference>
<dbReference type="SMR" id="A4QBQ6"/>
<dbReference type="KEGG" id="cgt:cgR_0682"/>
<dbReference type="HOGENOM" id="CLU_092403_0_2_11"/>
<dbReference type="PhylomeDB" id="A4QBQ6"/>
<dbReference type="Proteomes" id="UP000006698">
    <property type="component" value="Chromosome"/>
</dbReference>
<dbReference type="GO" id="GO:0015935">
    <property type="term" value="C:small ribosomal subunit"/>
    <property type="evidence" value="ECO:0007669"/>
    <property type="project" value="InterPro"/>
</dbReference>
<dbReference type="GO" id="GO:0019843">
    <property type="term" value="F:rRNA binding"/>
    <property type="evidence" value="ECO:0007669"/>
    <property type="project" value="UniProtKB-UniRule"/>
</dbReference>
<dbReference type="GO" id="GO:0003735">
    <property type="term" value="F:structural constituent of ribosome"/>
    <property type="evidence" value="ECO:0007669"/>
    <property type="project" value="InterPro"/>
</dbReference>
<dbReference type="GO" id="GO:0042274">
    <property type="term" value="P:ribosomal small subunit biogenesis"/>
    <property type="evidence" value="ECO:0007669"/>
    <property type="project" value="TreeGrafter"/>
</dbReference>
<dbReference type="GO" id="GO:0006412">
    <property type="term" value="P:translation"/>
    <property type="evidence" value="ECO:0007669"/>
    <property type="project" value="UniProtKB-UniRule"/>
</dbReference>
<dbReference type="CDD" id="cd00165">
    <property type="entry name" value="S4"/>
    <property type="match status" value="1"/>
</dbReference>
<dbReference type="FunFam" id="3.10.290.10:FF:000001">
    <property type="entry name" value="30S ribosomal protein S4"/>
    <property type="match status" value="1"/>
</dbReference>
<dbReference type="Gene3D" id="1.10.1050.10">
    <property type="entry name" value="Ribosomal Protein S4 Delta 41, Chain A, domain 1"/>
    <property type="match status" value="1"/>
</dbReference>
<dbReference type="Gene3D" id="3.10.290.10">
    <property type="entry name" value="RNA-binding S4 domain"/>
    <property type="match status" value="1"/>
</dbReference>
<dbReference type="HAMAP" id="MF_01306_B">
    <property type="entry name" value="Ribosomal_uS4_B"/>
    <property type="match status" value="1"/>
</dbReference>
<dbReference type="InterPro" id="IPR022801">
    <property type="entry name" value="Ribosomal_uS4"/>
</dbReference>
<dbReference type="InterPro" id="IPR005709">
    <property type="entry name" value="Ribosomal_uS4_bac-type"/>
</dbReference>
<dbReference type="InterPro" id="IPR018079">
    <property type="entry name" value="Ribosomal_uS4_CS"/>
</dbReference>
<dbReference type="InterPro" id="IPR001912">
    <property type="entry name" value="Ribosomal_uS4_N"/>
</dbReference>
<dbReference type="InterPro" id="IPR002942">
    <property type="entry name" value="S4_RNA-bd"/>
</dbReference>
<dbReference type="InterPro" id="IPR036986">
    <property type="entry name" value="S4_RNA-bd_sf"/>
</dbReference>
<dbReference type="NCBIfam" id="NF003717">
    <property type="entry name" value="PRK05327.1"/>
    <property type="match status" value="1"/>
</dbReference>
<dbReference type="NCBIfam" id="TIGR01017">
    <property type="entry name" value="rpsD_bact"/>
    <property type="match status" value="1"/>
</dbReference>
<dbReference type="PANTHER" id="PTHR11831">
    <property type="entry name" value="30S 40S RIBOSOMAL PROTEIN"/>
    <property type="match status" value="1"/>
</dbReference>
<dbReference type="PANTHER" id="PTHR11831:SF4">
    <property type="entry name" value="SMALL RIBOSOMAL SUBUNIT PROTEIN US4M"/>
    <property type="match status" value="1"/>
</dbReference>
<dbReference type="Pfam" id="PF00163">
    <property type="entry name" value="Ribosomal_S4"/>
    <property type="match status" value="1"/>
</dbReference>
<dbReference type="Pfam" id="PF01479">
    <property type="entry name" value="S4"/>
    <property type="match status" value="1"/>
</dbReference>
<dbReference type="SMART" id="SM01390">
    <property type="entry name" value="Ribosomal_S4"/>
    <property type="match status" value="1"/>
</dbReference>
<dbReference type="SMART" id="SM00363">
    <property type="entry name" value="S4"/>
    <property type="match status" value="1"/>
</dbReference>
<dbReference type="SUPFAM" id="SSF55174">
    <property type="entry name" value="Alpha-L RNA-binding motif"/>
    <property type="match status" value="1"/>
</dbReference>
<dbReference type="PROSITE" id="PS00632">
    <property type="entry name" value="RIBOSOMAL_S4"/>
    <property type="match status" value="1"/>
</dbReference>
<dbReference type="PROSITE" id="PS50889">
    <property type="entry name" value="S4"/>
    <property type="match status" value="1"/>
</dbReference>
<protein>
    <recommendedName>
        <fullName evidence="1">Small ribosomal subunit protein uS4</fullName>
    </recommendedName>
    <alternativeName>
        <fullName evidence="2">30S ribosomal protein S4</fullName>
    </alternativeName>
</protein>
<organism>
    <name type="scientific">Corynebacterium glutamicum (strain R)</name>
    <dbReference type="NCBI Taxonomy" id="340322"/>
    <lineage>
        <taxon>Bacteria</taxon>
        <taxon>Bacillati</taxon>
        <taxon>Actinomycetota</taxon>
        <taxon>Actinomycetes</taxon>
        <taxon>Mycobacteriales</taxon>
        <taxon>Corynebacteriaceae</taxon>
        <taxon>Corynebacterium</taxon>
    </lineage>
</organism>
<feature type="chain" id="PRO_0000322292" description="Small ribosomal subunit protein uS4">
    <location>
        <begin position="1"/>
        <end position="201"/>
    </location>
</feature>
<feature type="domain" description="S4 RNA-binding" evidence="1">
    <location>
        <begin position="91"/>
        <end position="151"/>
    </location>
</feature>
<accession>A4QBQ6</accession>
<name>RS4_CORGB</name>
<comment type="function">
    <text evidence="1">One of the primary rRNA binding proteins, it binds directly to 16S rRNA where it nucleates assembly of the body of the 30S subunit.</text>
</comment>
<comment type="function">
    <text evidence="1">With S5 and S12 plays an important role in translational accuracy.</text>
</comment>
<comment type="subunit">
    <text evidence="1">Part of the 30S ribosomal subunit. Contacts protein S5. The interaction surface between S4 and S5 is involved in control of translational fidelity.</text>
</comment>
<comment type="similarity">
    <text evidence="1">Belongs to the universal ribosomal protein uS4 family.</text>
</comment>
<sequence>MARYTGPATRKSRRLRVDLVGGDMAFERRPYPPGQAGRARIKESEYLLQLQEKQKARFIYGVMEKQFRRYYAEANRRAGKTGENLVVLLESRLDNVVYRAGLANTRRQARQLVSHGHFTVNGKAIDVPSFRVSQYDIINVREKSQKMNWFEEAQDNLVDAVVPAWLQVVPENLRILVHQLPERAQIDIPLQEQLIVEFYSK</sequence>
<proteinExistence type="inferred from homology"/>
<keyword id="KW-0687">Ribonucleoprotein</keyword>
<keyword id="KW-0689">Ribosomal protein</keyword>
<keyword id="KW-0694">RNA-binding</keyword>
<keyword id="KW-0699">rRNA-binding</keyword>